<sequence length="509" mass="58146">MTQQNAQSTSEPTISENDLIAQRHAKLKQIQDVAKETGKSPWPNTFKREHYAADLQEQFKDQSKEQIESAEHVYVKVAGRVMLNRGSFMVIQDMTGRIQLYVDRKGLPKDTLETIKGLDLGDIIAAEGYIGRSGKGDLYVHLEGFELLTKSLRPLPDKFHGLNDTEVKYRKRYLDLIVNEETRKTFEIRAKVVAGIRAFLTNERFMEVETPMMHVIPGGASARPFETHHNALDMPLFLRIAPELYLKRLVVGGFERVFEINRNFRNEGVSTRHNPEFTMIEFYQAYADYKDLMALTENMLEKLAIDILGTTDVPYQGEVFSFKGPFKKISMFDAILENNPQFTPENVGDREFLAKFVREELKEEVKPGFGLGKLQTIVFEETVETKLRQPTFITEYPAETSPLARRNDDNPHITDRFEFFIGGRELANGFSELNDPIDQAERFQAQVAEKDAGDDEAMHYDAEFVEALEYGLPPTAGEGIGIDRLVMLFADAPSIRDVILFPHMRRKEG</sequence>
<feature type="chain" id="PRO_1000101089" description="Lysine--tRNA ligase">
    <location>
        <begin position="1"/>
        <end position="509"/>
    </location>
</feature>
<feature type="binding site" evidence="1">
    <location>
        <position position="418"/>
    </location>
    <ligand>
        <name>Mg(2+)</name>
        <dbReference type="ChEBI" id="CHEBI:18420"/>
        <label>1</label>
    </ligand>
</feature>
<feature type="binding site" evidence="1">
    <location>
        <position position="425"/>
    </location>
    <ligand>
        <name>Mg(2+)</name>
        <dbReference type="ChEBI" id="CHEBI:18420"/>
        <label>1</label>
    </ligand>
</feature>
<feature type="binding site" evidence="1">
    <location>
        <position position="425"/>
    </location>
    <ligand>
        <name>Mg(2+)</name>
        <dbReference type="ChEBI" id="CHEBI:18420"/>
        <label>2</label>
    </ligand>
</feature>
<name>SYK_ACIBT</name>
<gene>
    <name evidence="1" type="primary">lysS</name>
    <name type="ordered locus">A1S_0998</name>
</gene>
<proteinExistence type="inferred from homology"/>
<accession>A3M3D6</accession>
<protein>
    <recommendedName>
        <fullName evidence="1">Lysine--tRNA ligase</fullName>
        <ecNumber evidence="1">6.1.1.6</ecNumber>
    </recommendedName>
    <alternativeName>
        <fullName evidence="1">Lysyl-tRNA synthetase</fullName>
        <shortName evidence="1">LysRS</shortName>
    </alternativeName>
</protein>
<dbReference type="EC" id="6.1.1.6" evidence="1"/>
<dbReference type="EMBL" id="CP000521">
    <property type="protein sequence ID" value="ABO11430.2"/>
    <property type="molecule type" value="Genomic_DNA"/>
</dbReference>
<dbReference type="RefSeq" id="WP_002017216.1">
    <property type="nucleotide sequence ID" value="NZ_CP053098.1"/>
</dbReference>
<dbReference type="SMR" id="A3M3D6"/>
<dbReference type="KEGG" id="acb:A1S_0998"/>
<dbReference type="HOGENOM" id="CLU_008255_6_0_6"/>
<dbReference type="GO" id="GO:0005829">
    <property type="term" value="C:cytosol"/>
    <property type="evidence" value="ECO:0007669"/>
    <property type="project" value="TreeGrafter"/>
</dbReference>
<dbReference type="GO" id="GO:0005524">
    <property type="term" value="F:ATP binding"/>
    <property type="evidence" value="ECO:0007669"/>
    <property type="project" value="UniProtKB-UniRule"/>
</dbReference>
<dbReference type="GO" id="GO:0004824">
    <property type="term" value="F:lysine-tRNA ligase activity"/>
    <property type="evidence" value="ECO:0007669"/>
    <property type="project" value="UniProtKB-UniRule"/>
</dbReference>
<dbReference type="GO" id="GO:0000287">
    <property type="term" value="F:magnesium ion binding"/>
    <property type="evidence" value="ECO:0007669"/>
    <property type="project" value="UniProtKB-UniRule"/>
</dbReference>
<dbReference type="GO" id="GO:0000049">
    <property type="term" value="F:tRNA binding"/>
    <property type="evidence" value="ECO:0007669"/>
    <property type="project" value="TreeGrafter"/>
</dbReference>
<dbReference type="GO" id="GO:0006430">
    <property type="term" value="P:lysyl-tRNA aminoacylation"/>
    <property type="evidence" value="ECO:0007669"/>
    <property type="project" value="UniProtKB-UniRule"/>
</dbReference>
<dbReference type="CDD" id="cd00775">
    <property type="entry name" value="LysRS_core"/>
    <property type="match status" value="1"/>
</dbReference>
<dbReference type="CDD" id="cd04322">
    <property type="entry name" value="LysRS_N"/>
    <property type="match status" value="1"/>
</dbReference>
<dbReference type="FunFam" id="2.40.50.140:FF:000024">
    <property type="entry name" value="Lysine--tRNA ligase"/>
    <property type="match status" value="1"/>
</dbReference>
<dbReference type="FunFam" id="3.30.930.10:FF:000001">
    <property type="entry name" value="Lysine--tRNA ligase"/>
    <property type="match status" value="1"/>
</dbReference>
<dbReference type="Gene3D" id="3.30.930.10">
    <property type="entry name" value="Bira Bifunctional Protein, Domain 2"/>
    <property type="match status" value="1"/>
</dbReference>
<dbReference type="Gene3D" id="2.40.50.140">
    <property type="entry name" value="Nucleic acid-binding proteins"/>
    <property type="match status" value="1"/>
</dbReference>
<dbReference type="HAMAP" id="MF_00252">
    <property type="entry name" value="Lys_tRNA_synth_class2"/>
    <property type="match status" value="1"/>
</dbReference>
<dbReference type="InterPro" id="IPR004364">
    <property type="entry name" value="Aa-tRNA-synt_II"/>
</dbReference>
<dbReference type="InterPro" id="IPR006195">
    <property type="entry name" value="aa-tRNA-synth_II"/>
</dbReference>
<dbReference type="InterPro" id="IPR045864">
    <property type="entry name" value="aa-tRNA-synth_II/BPL/LPL"/>
</dbReference>
<dbReference type="InterPro" id="IPR002313">
    <property type="entry name" value="Lys-tRNA-ligase_II"/>
</dbReference>
<dbReference type="InterPro" id="IPR044136">
    <property type="entry name" value="Lys-tRNA-ligase_II_N"/>
</dbReference>
<dbReference type="InterPro" id="IPR018149">
    <property type="entry name" value="Lys-tRNA-synth_II_C"/>
</dbReference>
<dbReference type="InterPro" id="IPR012340">
    <property type="entry name" value="NA-bd_OB-fold"/>
</dbReference>
<dbReference type="InterPro" id="IPR004365">
    <property type="entry name" value="NA-bd_OB_tRNA"/>
</dbReference>
<dbReference type="NCBIfam" id="TIGR00499">
    <property type="entry name" value="lysS_bact"/>
    <property type="match status" value="1"/>
</dbReference>
<dbReference type="NCBIfam" id="NF001756">
    <property type="entry name" value="PRK00484.1"/>
    <property type="match status" value="1"/>
</dbReference>
<dbReference type="PANTHER" id="PTHR42918:SF15">
    <property type="entry name" value="LYSINE--TRNA LIGASE, CHLOROPLASTIC_MITOCHONDRIAL"/>
    <property type="match status" value="1"/>
</dbReference>
<dbReference type="PANTHER" id="PTHR42918">
    <property type="entry name" value="LYSYL-TRNA SYNTHETASE"/>
    <property type="match status" value="1"/>
</dbReference>
<dbReference type="Pfam" id="PF00152">
    <property type="entry name" value="tRNA-synt_2"/>
    <property type="match status" value="1"/>
</dbReference>
<dbReference type="Pfam" id="PF01336">
    <property type="entry name" value="tRNA_anti-codon"/>
    <property type="match status" value="1"/>
</dbReference>
<dbReference type="PRINTS" id="PR00982">
    <property type="entry name" value="TRNASYNTHLYS"/>
</dbReference>
<dbReference type="SUPFAM" id="SSF55681">
    <property type="entry name" value="Class II aaRS and biotin synthetases"/>
    <property type="match status" value="1"/>
</dbReference>
<dbReference type="SUPFAM" id="SSF50249">
    <property type="entry name" value="Nucleic acid-binding proteins"/>
    <property type="match status" value="1"/>
</dbReference>
<dbReference type="PROSITE" id="PS50862">
    <property type="entry name" value="AA_TRNA_LIGASE_II"/>
    <property type="match status" value="1"/>
</dbReference>
<keyword id="KW-0030">Aminoacyl-tRNA synthetase</keyword>
<keyword id="KW-0067">ATP-binding</keyword>
<keyword id="KW-0963">Cytoplasm</keyword>
<keyword id="KW-0436">Ligase</keyword>
<keyword id="KW-0460">Magnesium</keyword>
<keyword id="KW-0479">Metal-binding</keyword>
<keyword id="KW-0547">Nucleotide-binding</keyword>
<keyword id="KW-0648">Protein biosynthesis</keyword>
<reference key="1">
    <citation type="journal article" date="2007" name="Genes Dev.">
        <title>New insights into Acinetobacter baumannii pathogenesis revealed by high-density pyrosequencing and transposon mutagenesis.</title>
        <authorList>
            <person name="Smith M.G."/>
            <person name="Gianoulis T.A."/>
            <person name="Pukatzki S."/>
            <person name="Mekalanos J.J."/>
            <person name="Ornston L.N."/>
            <person name="Gerstein M."/>
            <person name="Snyder M."/>
        </authorList>
    </citation>
    <scope>NUCLEOTIDE SEQUENCE [LARGE SCALE GENOMIC DNA]</scope>
    <source>
        <strain>ATCC 17978 / DSM 105126 / CIP 53.77 / LMG 1025 / NCDC KC755 / 5377</strain>
    </source>
</reference>
<organism>
    <name type="scientific">Acinetobacter baumannii (strain ATCC 17978 / DSM 105126 / CIP 53.77 / LMG 1025 / NCDC KC755 / 5377)</name>
    <dbReference type="NCBI Taxonomy" id="400667"/>
    <lineage>
        <taxon>Bacteria</taxon>
        <taxon>Pseudomonadati</taxon>
        <taxon>Pseudomonadota</taxon>
        <taxon>Gammaproteobacteria</taxon>
        <taxon>Moraxellales</taxon>
        <taxon>Moraxellaceae</taxon>
        <taxon>Acinetobacter</taxon>
        <taxon>Acinetobacter calcoaceticus/baumannii complex</taxon>
    </lineage>
</organism>
<evidence type="ECO:0000255" key="1">
    <source>
        <dbReference type="HAMAP-Rule" id="MF_00252"/>
    </source>
</evidence>
<comment type="catalytic activity">
    <reaction evidence="1">
        <text>tRNA(Lys) + L-lysine + ATP = L-lysyl-tRNA(Lys) + AMP + diphosphate</text>
        <dbReference type="Rhea" id="RHEA:20792"/>
        <dbReference type="Rhea" id="RHEA-COMP:9696"/>
        <dbReference type="Rhea" id="RHEA-COMP:9697"/>
        <dbReference type="ChEBI" id="CHEBI:30616"/>
        <dbReference type="ChEBI" id="CHEBI:32551"/>
        <dbReference type="ChEBI" id="CHEBI:33019"/>
        <dbReference type="ChEBI" id="CHEBI:78442"/>
        <dbReference type="ChEBI" id="CHEBI:78529"/>
        <dbReference type="ChEBI" id="CHEBI:456215"/>
        <dbReference type="EC" id="6.1.1.6"/>
    </reaction>
</comment>
<comment type="cofactor">
    <cofactor evidence="1">
        <name>Mg(2+)</name>
        <dbReference type="ChEBI" id="CHEBI:18420"/>
    </cofactor>
    <text evidence="1">Binds 3 Mg(2+) ions per subunit.</text>
</comment>
<comment type="subunit">
    <text evidence="1">Homodimer.</text>
</comment>
<comment type="subcellular location">
    <subcellularLocation>
        <location evidence="1">Cytoplasm</location>
    </subcellularLocation>
</comment>
<comment type="similarity">
    <text evidence="1">Belongs to the class-II aminoacyl-tRNA synthetase family.</text>
</comment>